<sequence>MAKEDNIEMQGTILETLPNTMFRVELENGHVVIAHISGKMRKNYIRILTGDKVTVQLTPYDLSKGRIVFRSR</sequence>
<organism>
    <name type="scientific">Shewanella loihica (strain ATCC BAA-1088 / PV-4)</name>
    <dbReference type="NCBI Taxonomy" id="323850"/>
    <lineage>
        <taxon>Bacteria</taxon>
        <taxon>Pseudomonadati</taxon>
        <taxon>Pseudomonadota</taxon>
        <taxon>Gammaproteobacteria</taxon>
        <taxon>Alteromonadales</taxon>
        <taxon>Shewanellaceae</taxon>
        <taxon>Shewanella</taxon>
    </lineage>
</organism>
<feature type="chain" id="PRO_0000338919" description="Translation initiation factor IF-1">
    <location>
        <begin position="1"/>
        <end position="72"/>
    </location>
</feature>
<feature type="domain" description="S1-like" evidence="1">
    <location>
        <begin position="1"/>
        <end position="72"/>
    </location>
</feature>
<gene>
    <name evidence="1" type="primary">infA</name>
    <name type="ordered locus">Shew_1567</name>
</gene>
<comment type="function">
    <text evidence="1">One of the essential components for the initiation of protein synthesis. Stabilizes the binding of IF-2 and IF-3 on the 30S subunit to which N-formylmethionyl-tRNA(fMet) subsequently binds. Helps modulate mRNA selection, yielding the 30S pre-initiation complex (PIC). Upon addition of the 50S ribosomal subunit IF-1, IF-2 and IF-3 are released leaving the mature 70S translation initiation complex.</text>
</comment>
<comment type="subunit">
    <text evidence="1">Component of the 30S ribosomal translation pre-initiation complex which assembles on the 30S ribosome in the order IF-2 and IF-3, IF-1 and N-formylmethionyl-tRNA(fMet); mRNA recruitment can occur at any time during PIC assembly.</text>
</comment>
<comment type="subcellular location">
    <subcellularLocation>
        <location evidence="1">Cytoplasm</location>
    </subcellularLocation>
</comment>
<comment type="similarity">
    <text evidence="1">Belongs to the IF-1 family.</text>
</comment>
<keyword id="KW-0963">Cytoplasm</keyword>
<keyword id="KW-0396">Initiation factor</keyword>
<keyword id="KW-0648">Protein biosynthesis</keyword>
<keyword id="KW-1185">Reference proteome</keyword>
<keyword id="KW-0694">RNA-binding</keyword>
<keyword id="KW-0699">rRNA-binding</keyword>
<proteinExistence type="inferred from homology"/>
<name>IF1_SHELP</name>
<protein>
    <recommendedName>
        <fullName evidence="1">Translation initiation factor IF-1</fullName>
    </recommendedName>
</protein>
<reference key="1">
    <citation type="submission" date="2007-03" db="EMBL/GenBank/DDBJ databases">
        <title>Complete sequence of Shewanella loihica PV-4.</title>
        <authorList>
            <consortium name="US DOE Joint Genome Institute"/>
            <person name="Copeland A."/>
            <person name="Lucas S."/>
            <person name="Lapidus A."/>
            <person name="Barry K."/>
            <person name="Detter J.C."/>
            <person name="Glavina del Rio T."/>
            <person name="Hammon N."/>
            <person name="Israni S."/>
            <person name="Dalin E."/>
            <person name="Tice H."/>
            <person name="Pitluck S."/>
            <person name="Chain P."/>
            <person name="Malfatti S."/>
            <person name="Shin M."/>
            <person name="Vergez L."/>
            <person name="Schmutz J."/>
            <person name="Larimer F."/>
            <person name="Land M."/>
            <person name="Hauser L."/>
            <person name="Kyrpides N."/>
            <person name="Mikhailova N."/>
            <person name="Romine M.F."/>
            <person name="Serres G."/>
            <person name="Fredrickson J."/>
            <person name="Tiedje J."/>
            <person name="Richardson P."/>
        </authorList>
    </citation>
    <scope>NUCLEOTIDE SEQUENCE [LARGE SCALE GENOMIC DNA]</scope>
    <source>
        <strain>ATCC BAA-1088 / PV-4</strain>
    </source>
</reference>
<accession>A3QD86</accession>
<dbReference type="EMBL" id="CP000606">
    <property type="protein sequence ID" value="ABO23434.1"/>
    <property type="molecule type" value="Genomic_DNA"/>
</dbReference>
<dbReference type="RefSeq" id="WP_011865366.1">
    <property type="nucleotide sequence ID" value="NC_009092.1"/>
</dbReference>
<dbReference type="SMR" id="A3QD86"/>
<dbReference type="STRING" id="323850.Shew_1567"/>
<dbReference type="KEGG" id="slo:Shew_1567"/>
<dbReference type="eggNOG" id="COG0361">
    <property type="taxonomic scope" value="Bacteria"/>
</dbReference>
<dbReference type="HOGENOM" id="CLU_151267_1_0_6"/>
<dbReference type="OrthoDB" id="9803250at2"/>
<dbReference type="Proteomes" id="UP000001558">
    <property type="component" value="Chromosome"/>
</dbReference>
<dbReference type="GO" id="GO:0005829">
    <property type="term" value="C:cytosol"/>
    <property type="evidence" value="ECO:0007669"/>
    <property type="project" value="TreeGrafter"/>
</dbReference>
<dbReference type="GO" id="GO:0043022">
    <property type="term" value="F:ribosome binding"/>
    <property type="evidence" value="ECO:0007669"/>
    <property type="project" value="UniProtKB-UniRule"/>
</dbReference>
<dbReference type="GO" id="GO:0019843">
    <property type="term" value="F:rRNA binding"/>
    <property type="evidence" value="ECO:0007669"/>
    <property type="project" value="UniProtKB-UniRule"/>
</dbReference>
<dbReference type="GO" id="GO:0003743">
    <property type="term" value="F:translation initiation factor activity"/>
    <property type="evidence" value="ECO:0007669"/>
    <property type="project" value="UniProtKB-UniRule"/>
</dbReference>
<dbReference type="CDD" id="cd04451">
    <property type="entry name" value="S1_IF1"/>
    <property type="match status" value="1"/>
</dbReference>
<dbReference type="FunFam" id="2.40.50.140:FF:000002">
    <property type="entry name" value="Translation initiation factor IF-1"/>
    <property type="match status" value="1"/>
</dbReference>
<dbReference type="Gene3D" id="2.40.50.140">
    <property type="entry name" value="Nucleic acid-binding proteins"/>
    <property type="match status" value="1"/>
</dbReference>
<dbReference type="HAMAP" id="MF_00075">
    <property type="entry name" value="IF_1"/>
    <property type="match status" value="1"/>
</dbReference>
<dbReference type="InterPro" id="IPR012340">
    <property type="entry name" value="NA-bd_OB-fold"/>
</dbReference>
<dbReference type="InterPro" id="IPR006196">
    <property type="entry name" value="RNA-binding_domain_S1_IF1"/>
</dbReference>
<dbReference type="InterPro" id="IPR003029">
    <property type="entry name" value="S1_domain"/>
</dbReference>
<dbReference type="InterPro" id="IPR004368">
    <property type="entry name" value="TIF_IF1"/>
</dbReference>
<dbReference type="NCBIfam" id="TIGR00008">
    <property type="entry name" value="infA"/>
    <property type="match status" value="1"/>
</dbReference>
<dbReference type="PANTHER" id="PTHR33370">
    <property type="entry name" value="TRANSLATION INITIATION FACTOR IF-1, CHLOROPLASTIC"/>
    <property type="match status" value="1"/>
</dbReference>
<dbReference type="PANTHER" id="PTHR33370:SF1">
    <property type="entry name" value="TRANSLATION INITIATION FACTOR IF-1, CHLOROPLASTIC"/>
    <property type="match status" value="1"/>
</dbReference>
<dbReference type="Pfam" id="PF01176">
    <property type="entry name" value="eIF-1a"/>
    <property type="match status" value="1"/>
</dbReference>
<dbReference type="SMART" id="SM00316">
    <property type="entry name" value="S1"/>
    <property type="match status" value="1"/>
</dbReference>
<dbReference type="SUPFAM" id="SSF50249">
    <property type="entry name" value="Nucleic acid-binding proteins"/>
    <property type="match status" value="1"/>
</dbReference>
<dbReference type="PROSITE" id="PS50832">
    <property type="entry name" value="S1_IF1_TYPE"/>
    <property type="match status" value="1"/>
</dbReference>
<evidence type="ECO:0000255" key="1">
    <source>
        <dbReference type="HAMAP-Rule" id="MF_00075"/>
    </source>
</evidence>